<proteinExistence type="inferred from homology"/>
<sequence>MNKLITVAIDGPAGAGKSTIAKIIGEKFNLMYINTGSMYRAVTLKALENNISAEEVDKLLVMIDGMDMHFENDELILNGENINSLITMPNISKNVSAYASIREVRERLVNLMRKMALKYSVIMDGRDIGTVVLKDANFKFFLTASPEERADRRYKELMGKGVEVNYDEILQDIIKRDYLDSNREVDPLRKAEDAIEIDTTGIGIMGVVEKISSYMEK</sequence>
<name>KCY_CLOP1</name>
<organism>
    <name type="scientific">Clostridium perfringens (strain ATCC 13124 / DSM 756 / JCM 1290 / NCIMB 6125 / NCTC 8237 / Type A)</name>
    <dbReference type="NCBI Taxonomy" id="195103"/>
    <lineage>
        <taxon>Bacteria</taxon>
        <taxon>Bacillati</taxon>
        <taxon>Bacillota</taxon>
        <taxon>Clostridia</taxon>
        <taxon>Eubacteriales</taxon>
        <taxon>Clostridiaceae</taxon>
        <taxon>Clostridium</taxon>
    </lineage>
</organism>
<keyword id="KW-0067">ATP-binding</keyword>
<keyword id="KW-0963">Cytoplasm</keyword>
<keyword id="KW-0418">Kinase</keyword>
<keyword id="KW-0547">Nucleotide-binding</keyword>
<keyword id="KW-0808">Transferase</keyword>
<gene>
    <name evidence="1" type="primary">cmk</name>
    <name type="ordered locus">CPF_1340</name>
</gene>
<accession>Q0TRF4</accession>
<reference key="1">
    <citation type="journal article" date="2006" name="Genome Res.">
        <title>Skewed genomic variability in strains of the toxigenic bacterial pathogen, Clostridium perfringens.</title>
        <authorList>
            <person name="Myers G.S.A."/>
            <person name="Rasko D.A."/>
            <person name="Cheung J.K."/>
            <person name="Ravel J."/>
            <person name="Seshadri R."/>
            <person name="DeBoy R.T."/>
            <person name="Ren Q."/>
            <person name="Varga J."/>
            <person name="Awad M.M."/>
            <person name="Brinkac L.M."/>
            <person name="Daugherty S.C."/>
            <person name="Haft D.H."/>
            <person name="Dodson R.J."/>
            <person name="Madupu R."/>
            <person name="Nelson W.C."/>
            <person name="Rosovitz M.J."/>
            <person name="Sullivan S.A."/>
            <person name="Khouri H."/>
            <person name="Dimitrov G.I."/>
            <person name="Watkins K.L."/>
            <person name="Mulligan S."/>
            <person name="Benton J."/>
            <person name="Radune D."/>
            <person name="Fisher D.J."/>
            <person name="Atkins H.S."/>
            <person name="Hiscox T."/>
            <person name="Jost B.H."/>
            <person name="Billington S.J."/>
            <person name="Songer J.G."/>
            <person name="McClane B.A."/>
            <person name="Titball R.W."/>
            <person name="Rood J.I."/>
            <person name="Melville S.B."/>
            <person name="Paulsen I.T."/>
        </authorList>
    </citation>
    <scope>NUCLEOTIDE SEQUENCE [LARGE SCALE GENOMIC DNA]</scope>
    <source>
        <strain>ATCC 13124 / DSM 756 / JCM 1290 / NCIMB 6125 / NCTC 8237 / S 107 / Type A</strain>
    </source>
</reference>
<comment type="catalytic activity">
    <reaction evidence="1">
        <text>CMP + ATP = CDP + ADP</text>
        <dbReference type="Rhea" id="RHEA:11600"/>
        <dbReference type="ChEBI" id="CHEBI:30616"/>
        <dbReference type="ChEBI" id="CHEBI:58069"/>
        <dbReference type="ChEBI" id="CHEBI:60377"/>
        <dbReference type="ChEBI" id="CHEBI:456216"/>
        <dbReference type="EC" id="2.7.4.25"/>
    </reaction>
</comment>
<comment type="catalytic activity">
    <reaction evidence="1">
        <text>dCMP + ATP = dCDP + ADP</text>
        <dbReference type="Rhea" id="RHEA:25094"/>
        <dbReference type="ChEBI" id="CHEBI:30616"/>
        <dbReference type="ChEBI" id="CHEBI:57566"/>
        <dbReference type="ChEBI" id="CHEBI:58593"/>
        <dbReference type="ChEBI" id="CHEBI:456216"/>
        <dbReference type="EC" id="2.7.4.25"/>
    </reaction>
</comment>
<comment type="subcellular location">
    <subcellularLocation>
        <location evidence="1">Cytoplasm</location>
    </subcellularLocation>
</comment>
<comment type="similarity">
    <text evidence="1">Belongs to the cytidylate kinase family. Type 1 subfamily.</text>
</comment>
<protein>
    <recommendedName>
        <fullName evidence="1">Cytidylate kinase</fullName>
        <shortName evidence="1">CK</shortName>
        <ecNumber evidence="1">2.7.4.25</ecNumber>
    </recommendedName>
    <alternativeName>
        <fullName evidence="1">Cytidine monophosphate kinase</fullName>
        <shortName evidence="1">CMP kinase</shortName>
    </alternativeName>
</protein>
<evidence type="ECO:0000255" key="1">
    <source>
        <dbReference type="HAMAP-Rule" id="MF_00238"/>
    </source>
</evidence>
<feature type="chain" id="PRO_1000048210" description="Cytidylate kinase">
    <location>
        <begin position="1"/>
        <end position="217"/>
    </location>
</feature>
<feature type="binding site" evidence="1">
    <location>
        <begin position="11"/>
        <end position="19"/>
    </location>
    <ligand>
        <name>ATP</name>
        <dbReference type="ChEBI" id="CHEBI:30616"/>
    </ligand>
</feature>
<dbReference type="EC" id="2.7.4.25" evidence="1"/>
<dbReference type="EMBL" id="CP000246">
    <property type="protein sequence ID" value="ABG83654.1"/>
    <property type="molecule type" value="Genomic_DNA"/>
</dbReference>
<dbReference type="RefSeq" id="WP_003460731.1">
    <property type="nucleotide sequence ID" value="NC_008261.1"/>
</dbReference>
<dbReference type="SMR" id="Q0TRF4"/>
<dbReference type="STRING" id="195103.CPF_1340"/>
<dbReference type="PaxDb" id="195103-CPF_1340"/>
<dbReference type="GeneID" id="93002347"/>
<dbReference type="KEGG" id="cpf:CPF_1340"/>
<dbReference type="eggNOG" id="COG0283">
    <property type="taxonomic scope" value="Bacteria"/>
</dbReference>
<dbReference type="HOGENOM" id="CLU_079959_0_2_9"/>
<dbReference type="Proteomes" id="UP000001823">
    <property type="component" value="Chromosome"/>
</dbReference>
<dbReference type="GO" id="GO:0005829">
    <property type="term" value="C:cytosol"/>
    <property type="evidence" value="ECO:0007669"/>
    <property type="project" value="TreeGrafter"/>
</dbReference>
<dbReference type="GO" id="GO:0005524">
    <property type="term" value="F:ATP binding"/>
    <property type="evidence" value="ECO:0007669"/>
    <property type="project" value="UniProtKB-UniRule"/>
</dbReference>
<dbReference type="GO" id="GO:0036430">
    <property type="term" value="F:CMP kinase activity"/>
    <property type="evidence" value="ECO:0007669"/>
    <property type="project" value="RHEA"/>
</dbReference>
<dbReference type="GO" id="GO:0036431">
    <property type="term" value="F:dCMP kinase activity"/>
    <property type="evidence" value="ECO:0007669"/>
    <property type="project" value="RHEA"/>
</dbReference>
<dbReference type="GO" id="GO:0015949">
    <property type="term" value="P:nucleobase-containing small molecule interconversion"/>
    <property type="evidence" value="ECO:0007669"/>
    <property type="project" value="TreeGrafter"/>
</dbReference>
<dbReference type="GO" id="GO:0006220">
    <property type="term" value="P:pyrimidine nucleotide metabolic process"/>
    <property type="evidence" value="ECO:0007669"/>
    <property type="project" value="UniProtKB-UniRule"/>
</dbReference>
<dbReference type="CDD" id="cd02020">
    <property type="entry name" value="CMPK"/>
    <property type="match status" value="1"/>
</dbReference>
<dbReference type="Gene3D" id="3.40.50.300">
    <property type="entry name" value="P-loop containing nucleotide triphosphate hydrolases"/>
    <property type="match status" value="1"/>
</dbReference>
<dbReference type="HAMAP" id="MF_00238">
    <property type="entry name" value="Cytidyl_kinase_type1"/>
    <property type="match status" value="1"/>
</dbReference>
<dbReference type="InterPro" id="IPR003136">
    <property type="entry name" value="Cytidylate_kin"/>
</dbReference>
<dbReference type="InterPro" id="IPR011994">
    <property type="entry name" value="Cytidylate_kinase_dom"/>
</dbReference>
<dbReference type="InterPro" id="IPR027417">
    <property type="entry name" value="P-loop_NTPase"/>
</dbReference>
<dbReference type="NCBIfam" id="TIGR00017">
    <property type="entry name" value="cmk"/>
    <property type="match status" value="1"/>
</dbReference>
<dbReference type="PANTHER" id="PTHR21299:SF2">
    <property type="entry name" value="CYTIDYLATE KINASE"/>
    <property type="match status" value="1"/>
</dbReference>
<dbReference type="PANTHER" id="PTHR21299">
    <property type="entry name" value="CYTIDYLATE KINASE/PANTOATE-BETA-ALANINE LIGASE"/>
    <property type="match status" value="1"/>
</dbReference>
<dbReference type="Pfam" id="PF02224">
    <property type="entry name" value="Cytidylate_kin"/>
    <property type="match status" value="1"/>
</dbReference>
<dbReference type="SUPFAM" id="SSF52540">
    <property type="entry name" value="P-loop containing nucleoside triphosphate hydrolases"/>
    <property type="match status" value="1"/>
</dbReference>